<reference key="1">
    <citation type="journal article" date="1989" name="Biol. Chem. Hoppe-Seyler">
        <title>Carnivora: the primary structure of the giant otter (Pteronura brasiliensis, Mustelidae) hemoglobin.</title>
        <authorList>
            <person name="Kleinschmidt T."/>
            <person name="Braunitzer G."/>
            <person name="Scheil H.-G."/>
        </authorList>
    </citation>
    <scope>PROTEIN SEQUENCE</scope>
</reference>
<comment type="function">
    <text>Involved in oxygen transport from the lung to the various peripheral tissues.</text>
</comment>
<comment type="subunit">
    <text>Heterotetramer of two alpha chains and two beta chains.</text>
</comment>
<comment type="tissue specificity">
    <text>Red blood cells.</text>
</comment>
<comment type="similarity">
    <text evidence="3">Belongs to the globin family.</text>
</comment>
<keyword id="KW-0007">Acetylation</keyword>
<keyword id="KW-0903">Direct protein sequencing</keyword>
<keyword id="KW-0349">Heme</keyword>
<keyword id="KW-0408">Iron</keyword>
<keyword id="KW-0479">Metal-binding</keyword>
<keyword id="KW-0561">Oxygen transport</keyword>
<keyword id="KW-0597">Phosphoprotein</keyword>
<keyword id="KW-0702">S-nitrosylation</keyword>
<keyword id="KW-0813">Transport</keyword>
<feature type="chain" id="PRO_0000053083" description="Hemoglobin subunit beta">
    <location>
        <begin position="1"/>
        <end position="146"/>
    </location>
</feature>
<feature type="domain" description="Globin" evidence="3">
    <location>
        <begin position="2"/>
        <end position="146"/>
    </location>
</feature>
<feature type="binding site" description="distal binding residue">
    <location>
        <position position="63"/>
    </location>
    <ligand>
        <name>heme b</name>
        <dbReference type="ChEBI" id="CHEBI:60344"/>
    </ligand>
    <ligandPart>
        <name>Fe</name>
        <dbReference type="ChEBI" id="CHEBI:18248"/>
    </ligandPart>
</feature>
<feature type="binding site" description="proximal binding residue">
    <location>
        <position position="92"/>
    </location>
    <ligand>
        <name>heme b</name>
        <dbReference type="ChEBI" id="CHEBI:60344"/>
    </ligand>
    <ligandPart>
        <name>Fe</name>
        <dbReference type="ChEBI" id="CHEBI:18248"/>
    </ligandPart>
</feature>
<feature type="modified residue" description="N-acetylvaline" evidence="1">
    <location>
        <position position="1"/>
    </location>
</feature>
<feature type="modified residue" description="Phosphothreonine" evidence="2">
    <location>
        <position position="12"/>
    </location>
</feature>
<feature type="modified residue" description="Phosphoserine" evidence="2">
    <location>
        <position position="44"/>
    </location>
</feature>
<feature type="modified residue" description="N6-acetyllysine" evidence="2">
    <location>
        <position position="59"/>
    </location>
</feature>
<feature type="modified residue" description="N6-acetyllysine" evidence="2">
    <location>
        <position position="82"/>
    </location>
</feature>
<feature type="modified residue" description="S-nitrosocysteine" evidence="2">
    <location>
        <position position="93"/>
    </location>
</feature>
<feature type="modified residue" description="N6-acetyllysine" evidence="2">
    <location>
        <position position="144"/>
    </location>
</feature>
<protein>
    <recommendedName>
        <fullName>Hemoglobin subunit beta</fullName>
    </recommendedName>
    <alternativeName>
        <fullName>Beta-globin</fullName>
    </alternativeName>
    <alternativeName>
        <fullName>Hemoglobin beta chain</fullName>
    </alternativeName>
</protein>
<dbReference type="PIR" id="S02081">
    <property type="entry name" value="HBOTG"/>
</dbReference>
<dbReference type="SMR" id="P68052"/>
<dbReference type="GO" id="GO:0072562">
    <property type="term" value="C:blood microparticle"/>
    <property type="evidence" value="ECO:0007669"/>
    <property type="project" value="TreeGrafter"/>
</dbReference>
<dbReference type="GO" id="GO:0031838">
    <property type="term" value="C:haptoglobin-hemoglobin complex"/>
    <property type="evidence" value="ECO:0007669"/>
    <property type="project" value="TreeGrafter"/>
</dbReference>
<dbReference type="GO" id="GO:0005833">
    <property type="term" value="C:hemoglobin complex"/>
    <property type="evidence" value="ECO:0007669"/>
    <property type="project" value="InterPro"/>
</dbReference>
<dbReference type="GO" id="GO:0031720">
    <property type="term" value="F:haptoglobin binding"/>
    <property type="evidence" value="ECO:0007669"/>
    <property type="project" value="TreeGrafter"/>
</dbReference>
<dbReference type="GO" id="GO:0020037">
    <property type="term" value="F:heme binding"/>
    <property type="evidence" value="ECO:0007669"/>
    <property type="project" value="InterPro"/>
</dbReference>
<dbReference type="GO" id="GO:0031721">
    <property type="term" value="F:hemoglobin alpha binding"/>
    <property type="evidence" value="ECO:0007669"/>
    <property type="project" value="TreeGrafter"/>
</dbReference>
<dbReference type="GO" id="GO:0046872">
    <property type="term" value="F:metal ion binding"/>
    <property type="evidence" value="ECO:0007669"/>
    <property type="project" value="UniProtKB-KW"/>
</dbReference>
<dbReference type="GO" id="GO:0043177">
    <property type="term" value="F:organic acid binding"/>
    <property type="evidence" value="ECO:0007669"/>
    <property type="project" value="TreeGrafter"/>
</dbReference>
<dbReference type="GO" id="GO:0019825">
    <property type="term" value="F:oxygen binding"/>
    <property type="evidence" value="ECO:0007669"/>
    <property type="project" value="InterPro"/>
</dbReference>
<dbReference type="GO" id="GO:0005344">
    <property type="term" value="F:oxygen carrier activity"/>
    <property type="evidence" value="ECO:0007669"/>
    <property type="project" value="UniProtKB-KW"/>
</dbReference>
<dbReference type="GO" id="GO:0004601">
    <property type="term" value="F:peroxidase activity"/>
    <property type="evidence" value="ECO:0007669"/>
    <property type="project" value="TreeGrafter"/>
</dbReference>
<dbReference type="GO" id="GO:0042744">
    <property type="term" value="P:hydrogen peroxide catabolic process"/>
    <property type="evidence" value="ECO:0007669"/>
    <property type="project" value="TreeGrafter"/>
</dbReference>
<dbReference type="CDD" id="cd08925">
    <property type="entry name" value="Hb-beta-like"/>
    <property type="match status" value="1"/>
</dbReference>
<dbReference type="FunFam" id="1.10.490.10:FF:000001">
    <property type="entry name" value="Hemoglobin subunit beta"/>
    <property type="match status" value="1"/>
</dbReference>
<dbReference type="Gene3D" id="1.10.490.10">
    <property type="entry name" value="Globins"/>
    <property type="match status" value="1"/>
</dbReference>
<dbReference type="InterPro" id="IPR000971">
    <property type="entry name" value="Globin"/>
</dbReference>
<dbReference type="InterPro" id="IPR009050">
    <property type="entry name" value="Globin-like_sf"/>
</dbReference>
<dbReference type="InterPro" id="IPR012292">
    <property type="entry name" value="Globin/Proto"/>
</dbReference>
<dbReference type="InterPro" id="IPR002337">
    <property type="entry name" value="Hemoglobin_b"/>
</dbReference>
<dbReference type="InterPro" id="IPR050056">
    <property type="entry name" value="Hemoglobin_oxygen_transport"/>
</dbReference>
<dbReference type="PANTHER" id="PTHR11442">
    <property type="entry name" value="HEMOGLOBIN FAMILY MEMBER"/>
    <property type="match status" value="1"/>
</dbReference>
<dbReference type="PANTHER" id="PTHR11442:SF42">
    <property type="entry name" value="HEMOGLOBIN SUBUNIT BETA"/>
    <property type="match status" value="1"/>
</dbReference>
<dbReference type="Pfam" id="PF00042">
    <property type="entry name" value="Globin"/>
    <property type="match status" value="1"/>
</dbReference>
<dbReference type="PRINTS" id="PR00814">
    <property type="entry name" value="BETAHAEM"/>
</dbReference>
<dbReference type="SUPFAM" id="SSF46458">
    <property type="entry name" value="Globin-like"/>
    <property type="match status" value="1"/>
</dbReference>
<dbReference type="PROSITE" id="PS01033">
    <property type="entry name" value="GLOBIN"/>
    <property type="match status" value="1"/>
</dbReference>
<name>HBB_PTEBR</name>
<organism>
    <name type="scientific">Pteronura brasiliensis</name>
    <name type="common">Giant otter</name>
    <dbReference type="NCBI Taxonomy" id="9672"/>
    <lineage>
        <taxon>Eukaryota</taxon>
        <taxon>Metazoa</taxon>
        <taxon>Chordata</taxon>
        <taxon>Craniata</taxon>
        <taxon>Vertebrata</taxon>
        <taxon>Euteleostomi</taxon>
        <taxon>Mammalia</taxon>
        <taxon>Eutheria</taxon>
        <taxon>Laurasiatheria</taxon>
        <taxon>Carnivora</taxon>
        <taxon>Caniformia</taxon>
        <taxon>Musteloidea</taxon>
        <taxon>Mustelidae</taxon>
        <taxon>Lutrinae</taxon>
        <taxon>Pteronura</taxon>
    </lineage>
</organism>
<accession>P68052</accession>
<accession>P10886</accession>
<sequence>VHLTGEEKAAVTALWGKVNVDEVGGEALGRLLVVYPWTQRFFDSFGDLSSPDAVMGNPKVKAHGKKVLNSFSEGLKNLDNLKGTFAKLSELHCDKLHVDPENFKLLGNVLVCVLAHHFGKEFTPQVQAAYQKVVAGVANALAHKYH</sequence>
<evidence type="ECO:0000250" key="1">
    <source>
        <dbReference type="UniProtKB" id="P02086"/>
    </source>
</evidence>
<evidence type="ECO:0000250" key="2">
    <source>
        <dbReference type="UniProtKB" id="P68871"/>
    </source>
</evidence>
<evidence type="ECO:0000255" key="3">
    <source>
        <dbReference type="PROSITE-ProRule" id="PRU00238"/>
    </source>
</evidence>
<proteinExistence type="evidence at protein level"/>
<gene>
    <name type="primary">HBB</name>
</gene>